<name>CCDA2_ECOLX</name>
<accession>Q46995</accession>
<dbReference type="EMBL" id="U51588">
    <property type="protein sequence ID" value="AAA96061.1"/>
    <property type="molecule type" value="Genomic_DNA"/>
</dbReference>
<dbReference type="GO" id="GO:0003677">
    <property type="term" value="F:DNA binding"/>
    <property type="evidence" value="ECO:0007669"/>
    <property type="project" value="UniProtKB-KW"/>
</dbReference>
<dbReference type="Gene3D" id="1.10.1220.80">
    <property type="match status" value="1"/>
</dbReference>
<dbReference type="InterPro" id="IPR009956">
    <property type="entry name" value="Post-segregation_anti-tox_CcdA"/>
</dbReference>
<dbReference type="NCBIfam" id="NF010264">
    <property type="entry name" value="PRK13710.1"/>
    <property type="match status" value="1"/>
</dbReference>
<dbReference type="Pfam" id="PF07362">
    <property type="entry name" value="CcdA"/>
    <property type="match status" value="1"/>
</dbReference>
<evidence type="ECO:0000250" key="1"/>
<evidence type="ECO:0000305" key="2"/>
<geneLocation type="plasmid">
    <name>TP181</name>
</geneLocation>
<protein>
    <recommendedName>
        <fullName>Antitoxin CcdA</fullName>
    </recommendedName>
    <alternativeName>
        <fullName>Protein LetA</fullName>
    </alternativeName>
</protein>
<organism>
    <name type="scientific">Escherichia coli</name>
    <dbReference type="NCBI Taxonomy" id="562"/>
    <lineage>
        <taxon>Bacteria</taxon>
        <taxon>Pseudomonadati</taxon>
        <taxon>Pseudomonadota</taxon>
        <taxon>Gammaproteobacteria</taxon>
        <taxon>Enterobacterales</taxon>
        <taxon>Enterobacteriaceae</taxon>
        <taxon>Escherichia</taxon>
    </lineage>
</organism>
<sequence>MKQRITVAGDSDNYQLLKAYDVNISGLVSTPMQNEARRLRPERWKVANQEGMAEVARFIEMNGSFADENRDW</sequence>
<reference key="1">
    <citation type="submission" date="1996-04" db="EMBL/GenBank/DDBJ databases">
        <title>Curing of the F-like plasmid TP181 by plumbagin is due to interference with both replication and maintenance functions.</title>
        <authorList>
            <person name="Lakshmi V.V."/>
            <person name="Thomas C.M."/>
        </authorList>
    </citation>
    <scope>NUCLEOTIDE SEQUENCE [GENOMIC DNA]</scope>
</reference>
<gene>
    <name type="primary">ccdA</name>
    <name type="synonym">letA</name>
</gene>
<feature type="chain" id="PRO_0000068385" description="Antitoxin CcdA">
    <location>
        <begin position="1"/>
        <end position="72"/>
    </location>
</feature>
<keyword id="KW-0238">DNA-binding</keyword>
<keyword id="KW-0614">Plasmid</keyword>
<keyword id="KW-0678">Repressor</keyword>
<keyword id="KW-1277">Toxin-antitoxin system</keyword>
<keyword id="KW-0804">Transcription</keyword>
<keyword id="KW-0805">Transcription regulation</keyword>
<comment type="function">
    <text evidence="1">Antitoxin component of a type II toxin-antitoxin (TA) system which inhibits the post-segregational killing (PSK) of plasmid-free cells, also referred to as a plasmid addiction system. Binds to and blocks the activity of CcdB; will also remove bound CcdB protein from the CcdB-GyrA complex by forming a CcdA-CcdB complex, a process termed rejuvenation. Functions as a transcriptional corepressor for the ccdAB operon, repression also requires CcdB (By similarity).</text>
</comment>
<comment type="subunit">
    <text evidence="1">Homodimer in solution and when bound to DNA. Forms a complex with toxin CcdB; the CcdA-CcdB(2) trimer is sufficient for rejuvenation, whereas maximal operon repression occurs with CcdA(2)CcdB(2) (By similarity).</text>
</comment>
<comment type="similarity">
    <text evidence="2">Belongs to the CcdA antitoxin family.</text>
</comment>
<proteinExistence type="inferred from homology"/>